<keyword id="KW-0064">Aspartyl protease</keyword>
<keyword id="KW-0903">Direct protein sequencing</keyword>
<keyword id="KW-0325">Glycoprotein</keyword>
<keyword id="KW-0378">Hydrolase</keyword>
<keyword id="KW-0645">Protease</keyword>
<keyword id="KW-1185">Reference proteome</keyword>
<keyword id="KW-0964">Secreted</keyword>
<dbReference type="EC" id="3.4.23.-"/>
<dbReference type="Proteomes" id="UP000002356">
    <property type="component" value="Unplaced"/>
</dbReference>
<dbReference type="GO" id="GO:0005576">
    <property type="term" value="C:extracellular region"/>
    <property type="evidence" value="ECO:0007669"/>
    <property type="project" value="UniProtKB-SubCell"/>
</dbReference>
<dbReference type="GO" id="GO:0004190">
    <property type="term" value="F:aspartic-type endopeptidase activity"/>
    <property type="evidence" value="ECO:0007669"/>
    <property type="project" value="UniProtKB-KW"/>
</dbReference>
<dbReference type="GO" id="GO:0006508">
    <property type="term" value="P:proteolysis"/>
    <property type="evidence" value="ECO:0007669"/>
    <property type="project" value="UniProtKB-KW"/>
</dbReference>
<accession>P83202</accession>
<comment type="subcellular location">
    <subcellularLocation>
        <location>Secreted</location>
    </subcellularLocation>
</comment>
<comment type="PTM">
    <text evidence="1">Glycosylated.</text>
</comment>
<comment type="similarity">
    <text evidence="1">Belongs to the peptidase A1 family.</text>
</comment>
<protein>
    <recommendedName>
        <fullName>Pregnancy-associated glycoprotein 55</fullName>
        <ecNumber>3.4.23.-</ecNumber>
    </recommendedName>
    <alternativeName>
        <fullName>ovPAG-55</fullName>
    </alternativeName>
</protein>
<organism evidence="1">
    <name type="scientific">Ovis aries</name>
    <name type="common">Sheep</name>
    <dbReference type="NCBI Taxonomy" id="9940"/>
    <lineage>
        <taxon>Eukaryota</taxon>
        <taxon>Metazoa</taxon>
        <taxon>Chordata</taxon>
        <taxon>Craniata</taxon>
        <taxon>Vertebrata</taxon>
        <taxon>Euteleostomi</taxon>
        <taxon>Mammalia</taxon>
        <taxon>Eutheria</taxon>
        <taxon>Laurasiatheria</taxon>
        <taxon>Artiodactyla</taxon>
        <taxon>Ruminantia</taxon>
        <taxon>Pecora</taxon>
        <taxon>Bovidae</taxon>
        <taxon>Caprinae</taxon>
        <taxon>Ovis</taxon>
    </lineage>
</organism>
<sequence length="18" mass="2129">RGSXLTILPLRNMRDIVY</sequence>
<evidence type="ECO:0000305" key="1"/>
<name>PAG55_SHEEP</name>
<proteinExistence type="evidence at protein level"/>
<feature type="chain" id="PRO_0000199518" description="Pregnancy-associated glycoprotein 55">
    <location>
        <begin position="1"/>
        <end position="18" status="greater than"/>
    </location>
</feature>
<feature type="non-terminal residue" evidence="1">
    <location>
        <position position="18"/>
    </location>
</feature>
<reference key="1">
    <citation type="journal article" date="2003" name="Mol. Reprod. Dev.">
        <title>Isolation and partial characterization of three pregnancy-associated glycoproteins from the ewe placenta.</title>
        <authorList>
            <person name="El Amiri B."/>
            <person name="Remy B."/>
            <person name="Sousa N.M."/>
            <person name="Joris B."/>
            <person name="Ottiers N.G."/>
            <person name="Perenyi Z."/>
            <person name="Mboko H.B."/>
            <person name="Beckers J.-F.M.P."/>
        </authorList>
    </citation>
    <scope>PROTEIN SEQUENCE</scope>
    <source>
        <tissue>Placenta</tissue>
    </source>
</reference>